<comment type="function">
    <text evidence="1">Putative adapter protein involved in asymmetrical cell division and cell polarization processes. May play a role in the formation of epithelial tight junctions (By similarity).</text>
</comment>
<comment type="subunit">
    <text evidence="1">Interacts with PARD6B. Interacts with INSC/inscuteable (By similarity).</text>
</comment>
<comment type="interaction">
    <interactant intactId="EBI-16107395">
        <id>Q9CSB4</id>
    </interactant>
    <interactant intactId="EBI-8627450">
        <id>Q9WTK7</id>
        <label>Stk11</label>
    </interactant>
    <organismsDiffer>false</organismsDiffer>
    <experiments>2</experiments>
</comment>
<comment type="subcellular location">
    <subcellularLocation>
        <location evidence="1">Endomembrane system</location>
    </subcellularLocation>
    <subcellularLocation>
        <location evidence="1">Cell junction</location>
    </subcellularLocation>
    <subcellularLocation>
        <location evidence="1">Cell junction</location>
        <location evidence="1">Tight junction</location>
    </subcellularLocation>
    <text evidence="1">Partially localized along the cell-cell contact region. Colocalizes with TJP1 to epithelial tight junctions (By similarity).</text>
</comment>
<comment type="alternative products">
    <event type="alternative splicing"/>
    <isoform>
        <id>Q9CSB4-1</id>
        <name>1</name>
        <sequence type="displayed"/>
    </isoform>
    <isoform>
        <id>Q9CSB4-2</id>
        <name>2</name>
        <sequence type="described" ref="VSP_022017"/>
    </isoform>
</comment>
<comment type="miscellaneous">
    <molecule>Isoform 2</molecule>
    <text evidence="6">Sequence incomplete.</text>
</comment>
<comment type="similarity">
    <text evidence="6">Belongs to the PAR3 family.</text>
</comment>
<sequence length="1203" mass="132780">MKVTVCFGRTGIVVPCKDGQLRVRELTQQALQRYLKTRDQDPGYWVKIHHLEYTDGGILDPDDVLADVVEDKDKLIAVFDEQEPLQKTESPGGNPADRQSPDAFETEVAAQLAAFKPVGGEIVVTPSALKLGTPLLVRRSSDPAPGPHADAQPSTASLSGQSLKPVVLDSTQNVENKEAMNGEQAGLLSLHRPKDELSDMTRAVEISGEGDPLGIHVVPFFSSLSGRILGLFIRGIEENSRCKQEGLFQENECIVKINNVELLDKTFAQAQDVFRQAMKSPSVILHVLLPQNREQYEKSVIGPLNIFGNNDGASRTKAAPPARGKPGLKAVHLTRASSPEGEEPASPQQSKSPRVPRLGRKPSSPSLSPLMGFGSKKNAKKIKIDLKKGPEGLGFTVVTRDSSIHGPGPIFVKNILPKGAAVKDGRLQSGDRILEVNGRDVTGRTQEELVAMLRSTKQGETVSLVIARQEGSFLPRELKGEPDCYALSLESSEQLTLEIPLNDSGSAGLGVSLKGNKSRETGTDLGIFIKSIIHGGAAFKDGRLRMNDQLIAVNGETLLGKSNHEAMETLRRSMSMEGNIRGMIQLVILRRPERPLEELSECGALSRPGFENCQEALSTSRRNDSSILYPFGTYSPQDKRKDLLLPSDGWAENEVPPSPPPHPALEWGLEDFSHSSGVDSTGYFPDQHVNFRTVTPVRQPELINLKASKSMDLVPDEGKVQSLADRRSDSPGKDFGPTLGLKKSSSLESLQTAVAEVRKNDLPFHRPRPHMVRGRGCNESFRAAIDKSYDGPEEADADGLSDKSSRSGHTALNCESAPQGNPELDNVENKAKNIKKTKEKEKKKGKGKLKVKEKKLKEEHEDAERKMKRKGFGAMLRFGKKKDDKVGKAEQKGAQKSGHPEEEELERMKEERERIGAKHQELREKQARGLVDYATAVTGPVHDMDDDEMDPNYARVNHFREPCASANVFRSPSPLRAGPLAYPRDGRPLSPDHLEGLYAKVNKPYHPPALADSGRPMAGTTDRIQKLRKEYYQARREGFLLYEDENTRARPSDHDLRWVSGKGPDGSTHNLRFEGMERQYASLPRGGSADPVDYLTASPRGRYNDRELPYYPGPHPVHAPRGSYPRPPDLRATDLRYPQYYPPPPAHQHKGPFRQDVPPSPPQHQRVPVYQEMGRAGPRGSSPDQYPYRNQDPRQKNPMTAAV</sequence>
<gene>
    <name type="primary">Pard3b</name>
    <name type="synonym">Als2cr19</name>
    <name type="synonym">Par3l</name>
</gene>
<feature type="chain" id="PRO_0000185073" description="Partitioning defective 3 homolog B">
    <location>
        <begin position="1"/>
        <end position="1203"/>
    </location>
</feature>
<feature type="domain" description="PDZ 1" evidence="3">
    <location>
        <begin position="201"/>
        <end position="289"/>
    </location>
</feature>
<feature type="domain" description="PDZ 2" evidence="3">
    <location>
        <begin position="383"/>
        <end position="468"/>
    </location>
</feature>
<feature type="domain" description="PDZ 3" evidence="3">
    <location>
        <begin position="496"/>
        <end position="585"/>
    </location>
</feature>
<feature type="region of interest" description="Disordered" evidence="4">
    <location>
        <begin position="79"/>
        <end position="104"/>
    </location>
</feature>
<feature type="region of interest" description="Disordered" evidence="4">
    <location>
        <begin position="138"/>
        <end position="162"/>
    </location>
</feature>
<feature type="region of interest" description="Disordered" evidence="4">
    <location>
        <begin position="334"/>
        <end position="374"/>
    </location>
</feature>
<feature type="region of interest" description="Disordered" evidence="4">
    <location>
        <begin position="718"/>
        <end position="743"/>
    </location>
</feature>
<feature type="region of interest" description="Disordered" evidence="4">
    <location>
        <begin position="787"/>
        <end position="927"/>
    </location>
</feature>
<feature type="region of interest" description="Disordered" evidence="4">
    <location>
        <begin position="968"/>
        <end position="994"/>
    </location>
</feature>
<feature type="region of interest" description="Disordered" evidence="4">
    <location>
        <begin position="1050"/>
        <end position="1203"/>
    </location>
</feature>
<feature type="compositionally biased region" description="Polar residues" evidence="4">
    <location>
        <begin position="152"/>
        <end position="162"/>
    </location>
</feature>
<feature type="compositionally biased region" description="Basic and acidic residues" evidence="4">
    <location>
        <begin position="718"/>
        <end position="732"/>
    </location>
</feature>
<feature type="compositionally biased region" description="Basic and acidic residues" evidence="4">
    <location>
        <begin position="827"/>
        <end position="842"/>
    </location>
</feature>
<feature type="compositionally biased region" description="Basic residues" evidence="4">
    <location>
        <begin position="843"/>
        <end position="854"/>
    </location>
</feature>
<feature type="compositionally biased region" description="Basic and acidic residues" evidence="4">
    <location>
        <begin position="855"/>
        <end position="865"/>
    </location>
</feature>
<feature type="compositionally biased region" description="Basic and acidic residues" evidence="4">
    <location>
        <begin position="881"/>
        <end position="893"/>
    </location>
</feature>
<feature type="compositionally biased region" description="Basic and acidic residues" evidence="4">
    <location>
        <begin position="906"/>
        <end position="927"/>
    </location>
</feature>
<feature type="compositionally biased region" description="Basic and acidic residues" evidence="4">
    <location>
        <begin position="984"/>
        <end position="994"/>
    </location>
</feature>
<feature type="modified residue" description="Phosphoserine" evidence="2">
    <location>
        <position position="100"/>
    </location>
</feature>
<feature type="modified residue" description="Phosphoserine" evidence="8">
    <location>
        <position position="346"/>
    </location>
</feature>
<feature type="modified residue" description="Phosphoserine" evidence="8">
    <location>
        <position position="352"/>
    </location>
</feature>
<feature type="modified residue" description="Phosphoserine" evidence="2">
    <location>
        <position position="368"/>
    </location>
</feature>
<feature type="modified residue" description="Phosphoserine" evidence="8">
    <location>
        <position position="635"/>
    </location>
</feature>
<feature type="modified residue" description="Phosphoserine" evidence="8">
    <location>
        <position position="710"/>
    </location>
</feature>
<feature type="modified residue" description="Phosphoserine" evidence="8">
    <location>
        <position position="728"/>
    </location>
</feature>
<feature type="modified residue" description="Phosphoserine" evidence="8">
    <location>
        <position position="730"/>
    </location>
</feature>
<feature type="modified residue" description="Phosphoserine" evidence="7 8">
    <location>
        <position position="746"/>
    </location>
</feature>
<feature type="modified residue" description="Phosphoserine" evidence="7 8">
    <location>
        <position position="749"/>
    </location>
</feature>
<feature type="modified residue" description="Phosphoserine" evidence="2">
    <location>
        <position position="801"/>
    </location>
</feature>
<feature type="modified residue" description="Phosphothreonine" evidence="8">
    <location>
        <position position="810"/>
    </location>
</feature>
<feature type="modified residue" description="Phosphoserine" evidence="8">
    <location>
        <position position="1088"/>
    </location>
</feature>
<feature type="modified residue" description="Phosphoserine" evidence="2">
    <location>
        <position position="1182"/>
    </location>
</feature>
<feature type="splice variant" id="VSP_022017" description="In isoform 2." evidence="5">
    <original>DSTQNVENKEAMNGEQAGLLSLHRPKDELSDMTRAVEISGEGDPL</original>
    <variation>RTLIGNSSSGEFSALFWLLWALHSCAWINTHSKHITENKIKTFKD</variation>
    <location>
        <begin position="169"/>
        <end position="213"/>
    </location>
</feature>
<feature type="strand" evidence="9">
    <location>
        <begin position="482"/>
        <end position="484"/>
    </location>
</feature>
<feature type="strand" evidence="9">
    <location>
        <begin position="493"/>
        <end position="500"/>
    </location>
</feature>
<feature type="strand" evidence="9">
    <location>
        <begin position="502"/>
        <end position="504"/>
    </location>
</feature>
<feature type="turn" evidence="9">
    <location>
        <begin position="505"/>
        <end position="507"/>
    </location>
</feature>
<feature type="strand" evidence="9">
    <location>
        <begin position="512"/>
        <end position="518"/>
    </location>
</feature>
<feature type="turn" evidence="9">
    <location>
        <begin position="519"/>
        <end position="522"/>
    </location>
</feature>
<feature type="strand" evidence="9">
    <location>
        <begin position="523"/>
        <end position="531"/>
    </location>
</feature>
<feature type="strand" evidence="9">
    <location>
        <begin position="534"/>
        <end position="537"/>
    </location>
</feature>
<feature type="helix" evidence="9">
    <location>
        <begin position="539"/>
        <end position="542"/>
    </location>
</feature>
<feature type="strand" evidence="9">
    <location>
        <begin position="549"/>
        <end position="553"/>
    </location>
</feature>
<feature type="strand" evidence="9">
    <location>
        <begin position="556"/>
        <end position="558"/>
    </location>
</feature>
<feature type="helix" evidence="9">
    <location>
        <begin position="563"/>
        <end position="580"/>
    </location>
</feature>
<feature type="strand" evidence="9">
    <location>
        <begin position="583"/>
        <end position="590"/>
    </location>
</feature>
<proteinExistence type="evidence at protein level"/>
<name>PAR3L_MOUSE</name>
<dbReference type="EMBL" id="AL645727">
    <property type="protein sequence ID" value="CAI24504.1"/>
    <property type="molecule type" value="Genomic_DNA"/>
</dbReference>
<dbReference type="EMBL" id="AL662815">
    <property type="protein sequence ID" value="CAI24504.1"/>
    <property type="status" value="JOINED"/>
    <property type="molecule type" value="Genomic_DNA"/>
</dbReference>
<dbReference type="EMBL" id="AL645669">
    <property type="protein sequence ID" value="CAI24504.1"/>
    <property type="status" value="JOINED"/>
    <property type="molecule type" value="Genomic_DNA"/>
</dbReference>
<dbReference type="EMBL" id="AL645544">
    <property type="protein sequence ID" value="CAI24504.1"/>
    <property type="status" value="JOINED"/>
    <property type="molecule type" value="Genomic_DNA"/>
</dbReference>
<dbReference type="EMBL" id="AL662920">
    <property type="protein sequence ID" value="CAI24504.1"/>
    <property type="status" value="JOINED"/>
    <property type="molecule type" value="Genomic_DNA"/>
</dbReference>
<dbReference type="EMBL" id="AL645669">
    <property type="protein sequence ID" value="CAI24824.1"/>
    <property type="molecule type" value="Genomic_DNA"/>
</dbReference>
<dbReference type="EMBL" id="AL662920">
    <property type="protein sequence ID" value="CAI24824.1"/>
    <property type="status" value="JOINED"/>
    <property type="molecule type" value="Genomic_DNA"/>
</dbReference>
<dbReference type="EMBL" id="AL662815">
    <property type="protein sequence ID" value="CAI24824.1"/>
    <property type="status" value="JOINED"/>
    <property type="molecule type" value="Genomic_DNA"/>
</dbReference>
<dbReference type="EMBL" id="AL645727">
    <property type="protein sequence ID" value="CAI24824.1"/>
    <property type="status" value="JOINED"/>
    <property type="molecule type" value="Genomic_DNA"/>
</dbReference>
<dbReference type="EMBL" id="AL645544">
    <property type="protein sequence ID" value="CAI24824.1"/>
    <property type="status" value="JOINED"/>
    <property type="molecule type" value="Genomic_DNA"/>
</dbReference>
<dbReference type="EMBL" id="AL645544">
    <property type="protein sequence ID" value="CAI25199.1"/>
    <property type="molecule type" value="Genomic_DNA"/>
</dbReference>
<dbReference type="EMBL" id="AL645669">
    <property type="protein sequence ID" value="CAI25199.1"/>
    <property type="status" value="JOINED"/>
    <property type="molecule type" value="Genomic_DNA"/>
</dbReference>
<dbReference type="EMBL" id="AL645727">
    <property type="protein sequence ID" value="CAI25199.1"/>
    <property type="status" value="JOINED"/>
    <property type="molecule type" value="Genomic_DNA"/>
</dbReference>
<dbReference type="EMBL" id="AL662815">
    <property type="protein sequence ID" value="CAI25199.1"/>
    <property type="status" value="JOINED"/>
    <property type="molecule type" value="Genomic_DNA"/>
</dbReference>
<dbReference type="EMBL" id="AL662920">
    <property type="protein sequence ID" value="CAI25199.1"/>
    <property type="status" value="JOINED"/>
    <property type="molecule type" value="Genomic_DNA"/>
</dbReference>
<dbReference type="EMBL" id="AL662815">
    <property type="protein sequence ID" value="CAI25349.1"/>
    <property type="molecule type" value="Genomic_DNA"/>
</dbReference>
<dbReference type="EMBL" id="AL645544">
    <property type="protein sequence ID" value="CAI25349.1"/>
    <property type="status" value="JOINED"/>
    <property type="molecule type" value="Genomic_DNA"/>
</dbReference>
<dbReference type="EMBL" id="AL645669">
    <property type="protein sequence ID" value="CAI25349.1"/>
    <property type="status" value="JOINED"/>
    <property type="molecule type" value="Genomic_DNA"/>
</dbReference>
<dbReference type="EMBL" id="AL645727">
    <property type="protein sequence ID" value="CAI25349.1"/>
    <property type="status" value="JOINED"/>
    <property type="molecule type" value="Genomic_DNA"/>
</dbReference>
<dbReference type="EMBL" id="AL662920">
    <property type="protein sequence ID" value="CAI25349.1"/>
    <property type="status" value="JOINED"/>
    <property type="molecule type" value="Genomic_DNA"/>
</dbReference>
<dbReference type="EMBL" id="AL662920">
    <property type="protein sequence ID" value="CAI26112.1"/>
    <property type="molecule type" value="Genomic_DNA"/>
</dbReference>
<dbReference type="EMBL" id="AL645544">
    <property type="protein sequence ID" value="CAI26112.1"/>
    <property type="status" value="JOINED"/>
    <property type="molecule type" value="Genomic_DNA"/>
</dbReference>
<dbReference type="EMBL" id="AL645669">
    <property type="protein sequence ID" value="CAI26112.1"/>
    <property type="status" value="JOINED"/>
    <property type="molecule type" value="Genomic_DNA"/>
</dbReference>
<dbReference type="EMBL" id="AL645727">
    <property type="protein sequence ID" value="CAI26112.1"/>
    <property type="status" value="JOINED"/>
    <property type="molecule type" value="Genomic_DNA"/>
</dbReference>
<dbReference type="EMBL" id="AL662815">
    <property type="protein sequence ID" value="CAI26112.1"/>
    <property type="status" value="JOINED"/>
    <property type="molecule type" value="Genomic_DNA"/>
</dbReference>
<dbReference type="EMBL" id="AK013352">
    <property type="protein sequence ID" value="BAB28805.1"/>
    <property type="molecule type" value="mRNA"/>
</dbReference>
<dbReference type="CCDS" id="CCDS48276.1">
    <molecule id="Q9CSB4-1"/>
</dbReference>
<dbReference type="RefSeq" id="NP_001074519.2">
    <molecule id="Q9CSB4-1"/>
    <property type="nucleotide sequence ID" value="NM_001081050.3"/>
</dbReference>
<dbReference type="PDB" id="1WG6">
    <property type="method" value="NMR"/>
    <property type="chains" value="A=478-591"/>
</dbReference>
<dbReference type="PDBsum" id="1WG6"/>
<dbReference type="SMR" id="Q9CSB4"/>
<dbReference type="BioGRID" id="215587">
    <property type="interactions" value="2"/>
</dbReference>
<dbReference type="DIP" id="DIP-60855N"/>
<dbReference type="FunCoup" id="Q9CSB4">
    <property type="interactions" value="664"/>
</dbReference>
<dbReference type="IntAct" id="Q9CSB4">
    <property type="interactions" value="1"/>
</dbReference>
<dbReference type="STRING" id="10090.ENSMUSP00000074837"/>
<dbReference type="iPTMnet" id="Q9CSB4"/>
<dbReference type="PhosphoSitePlus" id="Q9CSB4"/>
<dbReference type="jPOST" id="Q9CSB4"/>
<dbReference type="PaxDb" id="10090-ENSMUSP00000074837"/>
<dbReference type="ProteomicsDB" id="287953">
    <molecule id="Q9CSB4-1"/>
</dbReference>
<dbReference type="ProteomicsDB" id="287954">
    <molecule id="Q9CSB4-2"/>
</dbReference>
<dbReference type="Antibodypedia" id="34169">
    <property type="antibodies" value="40 antibodies from 17 providers"/>
</dbReference>
<dbReference type="DNASU" id="72823"/>
<dbReference type="Ensembl" id="ENSMUST00000075374.10">
    <molecule id="Q9CSB4-1"/>
    <property type="protein sequence ID" value="ENSMUSP00000074837.4"/>
    <property type="gene ID" value="ENSMUSG00000052062.15"/>
</dbReference>
<dbReference type="GeneID" id="72823"/>
<dbReference type="KEGG" id="mmu:72823"/>
<dbReference type="UCSC" id="uc007bfe.2">
    <molecule id="Q9CSB4-1"/>
    <property type="organism name" value="mouse"/>
</dbReference>
<dbReference type="AGR" id="MGI:1919301"/>
<dbReference type="CTD" id="117583"/>
<dbReference type="MGI" id="MGI:1919301">
    <property type="gene designation" value="Pard3b"/>
</dbReference>
<dbReference type="VEuPathDB" id="HostDB:ENSMUSG00000052062"/>
<dbReference type="eggNOG" id="KOG3528">
    <property type="taxonomic scope" value="Eukaryota"/>
</dbReference>
<dbReference type="GeneTree" id="ENSGT00950000183214"/>
<dbReference type="InParanoid" id="Q9CSB4"/>
<dbReference type="OMA" id="QFQHIKA"/>
<dbReference type="OrthoDB" id="6264899at2759"/>
<dbReference type="PhylomeDB" id="Q9CSB4"/>
<dbReference type="TreeFam" id="TF323729"/>
<dbReference type="BioGRID-ORCS" id="72823">
    <property type="hits" value="1 hit in 76 CRISPR screens"/>
</dbReference>
<dbReference type="ChiTaRS" id="Pard3b">
    <property type="organism name" value="mouse"/>
</dbReference>
<dbReference type="EvolutionaryTrace" id="Q9CSB4"/>
<dbReference type="PRO" id="PR:Q9CSB4"/>
<dbReference type="Proteomes" id="UP000000589">
    <property type="component" value="Chromosome 1"/>
</dbReference>
<dbReference type="RNAct" id="Q9CSB4">
    <property type="molecule type" value="protein"/>
</dbReference>
<dbReference type="Bgee" id="ENSMUSG00000052062">
    <property type="expression patterns" value="Expressed in rostral migratory stream and 193 other cell types or tissues"/>
</dbReference>
<dbReference type="ExpressionAtlas" id="Q9CSB4">
    <property type="expression patterns" value="baseline and differential"/>
</dbReference>
<dbReference type="GO" id="GO:0005923">
    <property type="term" value="C:bicellular tight junction"/>
    <property type="evidence" value="ECO:0007669"/>
    <property type="project" value="UniProtKB-SubCell"/>
</dbReference>
<dbReference type="GO" id="GO:0012505">
    <property type="term" value="C:endomembrane system"/>
    <property type="evidence" value="ECO:0007669"/>
    <property type="project" value="UniProtKB-SubCell"/>
</dbReference>
<dbReference type="GO" id="GO:0016020">
    <property type="term" value="C:membrane"/>
    <property type="evidence" value="ECO:0007669"/>
    <property type="project" value="UniProtKB-KW"/>
</dbReference>
<dbReference type="GO" id="GO:0032991">
    <property type="term" value="C:protein-containing complex"/>
    <property type="evidence" value="ECO:0007669"/>
    <property type="project" value="Ensembl"/>
</dbReference>
<dbReference type="GO" id="GO:0051301">
    <property type="term" value="P:cell division"/>
    <property type="evidence" value="ECO:0007669"/>
    <property type="project" value="UniProtKB-KW"/>
</dbReference>
<dbReference type="CDD" id="cd06691">
    <property type="entry name" value="PDZ1_Par3-like"/>
    <property type="match status" value="1"/>
</dbReference>
<dbReference type="CDD" id="cd23058">
    <property type="entry name" value="PDZ2_Par3-like"/>
    <property type="match status" value="1"/>
</dbReference>
<dbReference type="CDD" id="cd23059">
    <property type="entry name" value="PDZ3_Par3-like"/>
    <property type="match status" value="1"/>
</dbReference>
<dbReference type="FunFam" id="2.30.42.10:FF:000078">
    <property type="entry name" value="Partitioning defective 3 homolog B"/>
    <property type="match status" value="1"/>
</dbReference>
<dbReference type="FunFam" id="2.30.42.10:FF:000117">
    <property type="entry name" value="partitioning defective 3 homolog B isoform X2"/>
    <property type="match status" value="1"/>
</dbReference>
<dbReference type="FunFam" id="2.30.42.10:FF:000011">
    <property type="entry name" value="partitioning defective 3 homolog isoform X1"/>
    <property type="match status" value="1"/>
</dbReference>
<dbReference type="FunFam" id="3.10.20.90:FF:000017">
    <property type="entry name" value="partitioning defective 3 homolog isoform X2"/>
    <property type="match status" value="1"/>
</dbReference>
<dbReference type="Gene3D" id="2.30.42.10">
    <property type="match status" value="3"/>
</dbReference>
<dbReference type="Gene3D" id="3.10.20.90">
    <property type="entry name" value="Phosphatidylinositol 3-kinase Catalytic Subunit, Chain A, domain 1"/>
    <property type="match status" value="1"/>
</dbReference>
<dbReference type="InterPro" id="IPR052213">
    <property type="entry name" value="PAR3"/>
</dbReference>
<dbReference type="InterPro" id="IPR021922">
    <property type="entry name" value="Par3/HAL_N"/>
</dbReference>
<dbReference type="InterPro" id="IPR001478">
    <property type="entry name" value="PDZ"/>
</dbReference>
<dbReference type="InterPro" id="IPR036034">
    <property type="entry name" value="PDZ_sf"/>
</dbReference>
<dbReference type="PANTHER" id="PTHR16484:SF4">
    <property type="entry name" value="PARTITIONING DEFECTIVE 3 HOMOLOG B"/>
    <property type="match status" value="1"/>
</dbReference>
<dbReference type="PANTHER" id="PTHR16484">
    <property type="entry name" value="PARTITIONING DEFECTIVE 3 RELATED"/>
    <property type="match status" value="1"/>
</dbReference>
<dbReference type="Pfam" id="PF12053">
    <property type="entry name" value="Par3_HAL_N_term"/>
    <property type="match status" value="1"/>
</dbReference>
<dbReference type="Pfam" id="PF00595">
    <property type="entry name" value="PDZ"/>
    <property type="match status" value="2"/>
</dbReference>
<dbReference type="SMART" id="SM00228">
    <property type="entry name" value="PDZ"/>
    <property type="match status" value="3"/>
</dbReference>
<dbReference type="SUPFAM" id="SSF50156">
    <property type="entry name" value="PDZ domain-like"/>
    <property type="match status" value="3"/>
</dbReference>
<dbReference type="PROSITE" id="PS50106">
    <property type="entry name" value="PDZ"/>
    <property type="match status" value="2"/>
</dbReference>
<protein>
    <recommendedName>
        <fullName>Partitioning defective 3 homolog B</fullName>
    </recommendedName>
    <alternativeName>
        <fullName>Amyotrophic lateral sclerosis 2 chromosomal region candidate gene 19 protein homolog</fullName>
    </alternativeName>
    <alternativeName>
        <fullName>PAR3-beta</fullName>
    </alternativeName>
    <alternativeName>
        <fullName>Partitioning defective 3-like protein</fullName>
        <shortName>PAR3-L protein</shortName>
    </alternativeName>
</protein>
<accession>Q9CSB4</accession>
<accession>Q5SV53</accession>
<keyword id="KW-0002">3D-structure</keyword>
<keyword id="KW-0025">Alternative splicing</keyword>
<keyword id="KW-0131">Cell cycle</keyword>
<keyword id="KW-0132">Cell division</keyword>
<keyword id="KW-0965">Cell junction</keyword>
<keyword id="KW-0472">Membrane</keyword>
<keyword id="KW-0597">Phosphoprotein</keyword>
<keyword id="KW-1185">Reference proteome</keyword>
<keyword id="KW-0677">Repeat</keyword>
<keyword id="KW-0796">Tight junction</keyword>
<evidence type="ECO:0000250" key="1"/>
<evidence type="ECO:0000250" key="2">
    <source>
        <dbReference type="UniProtKB" id="Q8TEW8"/>
    </source>
</evidence>
<evidence type="ECO:0000255" key="3">
    <source>
        <dbReference type="PROSITE-ProRule" id="PRU00143"/>
    </source>
</evidence>
<evidence type="ECO:0000256" key="4">
    <source>
        <dbReference type="SAM" id="MobiDB-lite"/>
    </source>
</evidence>
<evidence type="ECO:0000303" key="5">
    <source>
    </source>
</evidence>
<evidence type="ECO:0000305" key="6"/>
<evidence type="ECO:0007744" key="7">
    <source>
    </source>
</evidence>
<evidence type="ECO:0007744" key="8">
    <source>
    </source>
</evidence>
<evidence type="ECO:0007829" key="9">
    <source>
        <dbReference type="PDB" id="1WG6"/>
    </source>
</evidence>
<reference key="1">
    <citation type="journal article" date="2009" name="PLoS Biol.">
        <title>Lineage-specific biology revealed by a finished genome assembly of the mouse.</title>
        <authorList>
            <person name="Church D.M."/>
            <person name="Goodstadt L."/>
            <person name="Hillier L.W."/>
            <person name="Zody M.C."/>
            <person name="Goldstein S."/>
            <person name="She X."/>
            <person name="Bult C.J."/>
            <person name="Agarwala R."/>
            <person name="Cherry J.L."/>
            <person name="DiCuccio M."/>
            <person name="Hlavina W."/>
            <person name="Kapustin Y."/>
            <person name="Meric P."/>
            <person name="Maglott D."/>
            <person name="Birtle Z."/>
            <person name="Marques A.C."/>
            <person name="Graves T."/>
            <person name="Zhou S."/>
            <person name="Teague B."/>
            <person name="Potamousis K."/>
            <person name="Churas C."/>
            <person name="Place M."/>
            <person name="Herschleb J."/>
            <person name="Runnheim R."/>
            <person name="Forrest D."/>
            <person name="Amos-Landgraf J."/>
            <person name="Schwartz D.C."/>
            <person name="Cheng Z."/>
            <person name="Lindblad-Toh K."/>
            <person name="Eichler E.E."/>
            <person name="Ponting C.P."/>
        </authorList>
    </citation>
    <scope>NUCLEOTIDE SEQUENCE [LARGE SCALE GENOMIC DNA]</scope>
    <source>
        <strain>C57BL/6J</strain>
    </source>
</reference>
<reference key="2">
    <citation type="journal article" date="2005" name="Science">
        <title>The transcriptional landscape of the mammalian genome.</title>
        <authorList>
            <person name="Carninci P."/>
            <person name="Kasukawa T."/>
            <person name="Katayama S."/>
            <person name="Gough J."/>
            <person name="Frith M.C."/>
            <person name="Maeda N."/>
            <person name="Oyama R."/>
            <person name="Ravasi T."/>
            <person name="Lenhard B."/>
            <person name="Wells C."/>
            <person name="Kodzius R."/>
            <person name="Shimokawa K."/>
            <person name="Bajic V.B."/>
            <person name="Brenner S.E."/>
            <person name="Batalov S."/>
            <person name="Forrest A.R."/>
            <person name="Zavolan M."/>
            <person name="Davis M.J."/>
            <person name="Wilming L.G."/>
            <person name="Aidinis V."/>
            <person name="Allen J.E."/>
            <person name="Ambesi-Impiombato A."/>
            <person name="Apweiler R."/>
            <person name="Aturaliya R.N."/>
            <person name="Bailey T.L."/>
            <person name="Bansal M."/>
            <person name="Baxter L."/>
            <person name="Beisel K.W."/>
            <person name="Bersano T."/>
            <person name="Bono H."/>
            <person name="Chalk A.M."/>
            <person name="Chiu K.P."/>
            <person name="Choudhary V."/>
            <person name="Christoffels A."/>
            <person name="Clutterbuck D.R."/>
            <person name="Crowe M.L."/>
            <person name="Dalla E."/>
            <person name="Dalrymple B.P."/>
            <person name="de Bono B."/>
            <person name="Della Gatta G."/>
            <person name="di Bernardo D."/>
            <person name="Down T."/>
            <person name="Engstrom P."/>
            <person name="Fagiolini M."/>
            <person name="Faulkner G."/>
            <person name="Fletcher C.F."/>
            <person name="Fukushima T."/>
            <person name="Furuno M."/>
            <person name="Futaki S."/>
            <person name="Gariboldi M."/>
            <person name="Georgii-Hemming P."/>
            <person name="Gingeras T.R."/>
            <person name="Gojobori T."/>
            <person name="Green R.E."/>
            <person name="Gustincich S."/>
            <person name="Harbers M."/>
            <person name="Hayashi Y."/>
            <person name="Hensch T.K."/>
            <person name="Hirokawa N."/>
            <person name="Hill D."/>
            <person name="Huminiecki L."/>
            <person name="Iacono M."/>
            <person name="Ikeo K."/>
            <person name="Iwama A."/>
            <person name="Ishikawa T."/>
            <person name="Jakt M."/>
            <person name="Kanapin A."/>
            <person name="Katoh M."/>
            <person name="Kawasawa Y."/>
            <person name="Kelso J."/>
            <person name="Kitamura H."/>
            <person name="Kitano H."/>
            <person name="Kollias G."/>
            <person name="Krishnan S.P."/>
            <person name="Kruger A."/>
            <person name="Kummerfeld S.K."/>
            <person name="Kurochkin I.V."/>
            <person name="Lareau L.F."/>
            <person name="Lazarevic D."/>
            <person name="Lipovich L."/>
            <person name="Liu J."/>
            <person name="Liuni S."/>
            <person name="McWilliam S."/>
            <person name="Madan Babu M."/>
            <person name="Madera M."/>
            <person name="Marchionni L."/>
            <person name="Matsuda H."/>
            <person name="Matsuzawa S."/>
            <person name="Miki H."/>
            <person name="Mignone F."/>
            <person name="Miyake S."/>
            <person name="Morris K."/>
            <person name="Mottagui-Tabar S."/>
            <person name="Mulder N."/>
            <person name="Nakano N."/>
            <person name="Nakauchi H."/>
            <person name="Ng P."/>
            <person name="Nilsson R."/>
            <person name="Nishiguchi S."/>
            <person name="Nishikawa S."/>
            <person name="Nori F."/>
            <person name="Ohara O."/>
            <person name="Okazaki Y."/>
            <person name="Orlando V."/>
            <person name="Pang K.C."/>
            <person name="Pavan W.J."/>
            <person name="Pavesi G."/>
            <person name="Pesole G."/>
            <person name="Petrovsky N."/>
            <person name="Piazza S."/>
            <person name="Reed J."/>
            <person name="Reid J.F."/>
            <person name="Ring B.Z."/>
            <person name="Ringwald M."/>
            <person name="Rost B."/>
            <person name="Ruan Y."/>
            <person name="Salzberg S.L."/>
            <person name="Sandelin A."/>
            <person name="Schneider C."/>
            <person name="Schoenbach C."/>
            <person name="Sekiguchi K."/>
            <person name="Semple C.A."/>
            <person name="Seno S."/>
            <person name="Sessa L."/>
            <person name="Sheng Y."/>
            <person name="Shibata Y."/>
            <person name="Shimada H."/>
            <person name="Shimada K."/>
            <person name="Silva D."/>
            <person name="Sinclair B."/>
            <person name="Sperling S."/>
            <person name="Stupka E."/>
            <person name="Sugiura K."/>
            <person name="Sultana R."/>
            <person name="Takenaka Y."/>
            <person name="Taki K."/>
            <person name="Tammoja K."/>
            <person name="Tan S.L."/>
            <person name="Tang S."/>
            <person name="Taylor M.S."/>
            <person name="Tegner J."/>
            <person name="Teichmann S.A."/>
            <person name="Ueda H.R."/>
            <person name="van Nimwegen E."/>
            <person name="Verardo R."/>
            <person name="Wei C.L."/>
            <person name="Yagi K."/>
            <person name="Yamanishi H."/>
            <person name="Zabarovsky E."/>
            <person name="Zhu S."/>
            <person name="Zimmer A."/>
            <person name="Hide W."/>
            <person name="Bult C."/>
            <person name="Grimmond S.M."/>
            <person name="Teasdale R.D."/>
            <person name="Liu E.T."/>
            <person name="Brusic V."/>
            <person name="Quackenbush J."/>
            <person name="Wahlestedt C."/>
            <person name="Mattick J.S."/>
            <person name="Hume D.A."/>
            <person name="Kai C."/>
            <person name="Sasaki D."/>
            <person name="Tomaru Y."/>
            <person name="Fukuda S."/>
            <person name="Kanamori-Katayama M."/>
            <person name="Suzuki M."/>
            <person name="Aoki J."/>
            <person name="Arakawa T."/>
            <person name="Iida J."/>
            <person name="Imamura K."/>
            <person name="Itoh M."/>
            <person name="Kato T."/>
            <person name="Kawaji H."/>
            <person name="Kawagashira N."/>
            <person name="Kawashima T."/>
            <person name="Kojima M."/>
            <person name="Kondo S."/>
            <person name="Konno H."/>
            <person name="Nakano K."/>
            <person name="Ninomiya N."/>
            <person name="Nishio T."/>
            <person name="Okada M."/>
            <person name="Plessy C."/>
            <person name="Shibata K."/>
            <person name="Shiraki T."/>
            <person name="Suzuki S."/>
            <person name="Tagami M."/>
            <person name="Waki K."/>
            <person name="Watahiki A."/>
            <person name="Okamura-Oho Y."/>
            <person name="Suzuki H."/>
            <person name="Kawai J."/>
            <person name="Hayashizaki Y."/>
        </authorList>
    </citation>
    <scope>NUCLEOTIDE SEQUENCE [LARGE SCALE MRNA] OF 1-213 (ISOFORM 2)</scope>
    <source>
        <strain>C57BL/6J</strain>
        <tissue>Embryo</tissue>
    </source>
</reference>
<reference key="3">
    <citation type="journal article" date="2007" name="Proc. Natl. Acad. Sci. U.S.A.">
        <title>Large-scale phosphorylation analysis of mouse liver.</title>
        <authorList>
            <person name="Villen J."/>
            <person name="Beausoleil S.A."/>
            <person name="Gerber S.A."/>
            <person name="Gygi S.P."/>
        </authorList>
    </citation>
    <scope>PHOSPHORYLATION [LARGE SCALE ANALYSIS] AT SER-746 AND SER-749</scope>
    <scope>IDENTIFICATION BY MASS SPECTROMETRY [LARGE SCALE ANALYSIS]</scope>
    <source>
        <tissue>Liver</tissue>
    </source>
</reference>
<reference key="4">
    <citation type="journal article" date="2010" name="Cell">
        <title>A tissue-specific atlas of mouse protein phosphorylation and expression.</title>
        <authorList>
            <person name="Huttlin E.L."/>
            <person name="Jedrychowski M.P."/>
            <person name="Elias J.E."/>
            <person name="Goswami T."/>
            <person name="Rad R."/>
            <person name="Beausoleil S.A."/>
            <person name="Villen J."/>
            <person name="Haas W."/>
            <person name="Sowa M.E."/>
            <person name="Gygi S.P."/>
        </authorList>
    </citation>
    <scope>PHOSPHORYLATION [LARGE SCALE ANALYSIS] AT SER-346; SER-352; SER-635; SER-710; SER-728; SER-730; SER-746; SER-749; THR-810 AND SER-1088</scope>
    <scope>IDENTIFICATION BY MASS SPECTROMETRY [LARGE SCALE ANALYSIS]</scope>
    <source>
        <tissue>Brain</tissue>
        <tissue>Brown adipose tissue</tissue>
        <tissue>Heart</tissue>
        <tissue>Kidney</tissue>
        <tissue>Liver</tissue>
        <tissue>Lung</tissue>
        <tissue>Pancreas</tissue>
        <tissue>Spleen</tissue>
        <tissue>Testis</tissue>
    </source>
</reference>
<reference key="5">
    <citation type="submission" date="2004-11" db="PDB data bank">
        <title>Solution structure of PDZ domain in protein XP_110852.</title>
        <authorList>
            <consortium name="RIKEN structural genomics initiative (RSGI)"/>
        </authorList>
    </citation>
    <scope>STRUCTURE BY NMR OF 478-591</scope>
</reference>
<organism>
    <name type="scientific">Mus musculus</name>
    <name type="common">Mouse</name>
    <dbReference type="NCBI Taxonomy" id="10090"/>
    <lineage>
        <taxon>Eukaryota</taxon>
        <taxon>Metazoa</taxon>
        <taxon>Chordata</taxon>
        <taxon>Craniata</taxon>
        <taxon>Vertebrata</taxon>
        <taxon>Euteleostomi</taxon>
        <taxon>Mammalia</taxon>
        <taxon>Eutheria</taxon>
        <taxon>Euarchontoglires</taxon>
        <taxon>Glires</taxon>
        <taxon>Rodentia</taxon>
        <taxon>Myomorpha</taxon>
        <taxon>Muroidea</taxon>
        <taxon>Muridae</taxon>
        <taxon>Murinae</taxon>
        <taxon>Mus</taxon>
        <taxon>Mus</taxon>
    </lineage>
</organism>